<feature type="chain" id="PRO_0000315112" description="UDP-N-acetylglucosamine--N-acetylmuramyl-(pentapeptide) pyrophosphoryl-undecaprenol N-acetylglucosamine transferase">
    <location>
        <begin position="1"/>
        <end position="370"/>
    </location>
</feature>
<feature type="binding site" evidence="1">
    <location>
        <begin position="15"/>
        <end position="17"/>
    </location>
    <ligand>
        <name>UDP-N-acetyl-alpha-D-glucosamine</name>
        <dbReference type="ChEBI" id="CHEBI:57705"/>
    </ligand>
</feature>
<feature type="binding site" evidence="1">
    <location>
        <position position="129"/>
    </location>
    <ligand>
        <name>UDP-N-acetyl-alpha-D-glucosamine</name>
        <dbReference type="ChEBI" id="CHEBI:57705"/>
    </ligand>
</feature>
<feature type="binding site" evidence="1">
    <location>
        <position position="170"/>
    </location>
    <ligand>
        <name>UDP-N-acetyl-alpha-D-glucosamine</name>
        <dbReference type="ChEBI" id="CHEBI:57705"/>
    </ligand>
</feature>
<feature type="binding site" evidence="1">
    <location>
        <position position="199"/>
    </location>
    <ligand>
        <name>UDP-N-acetyl-alpha-D-glucosamine</name>
        <dbReference type="ChEBI" id="CHEBI:57705"/>
    </ligand>
</feature>
<feature type="binding site" evidence="1">
    <location>
        <position position="254"/>
    </location>
    <ligand>
        <name>UDP-N-acetyl-alpha-D-glucosamine</name>
        <dbReference type="ChEBI" id="CHEBI:57705"/>
    </ligand>
</feature>
<feature type="binding site" evidence="1">
    <location>
        <position position="299"/>
    </location>
    <ligand>
        <name>UDP-N-acetyl-alpha-D-glucosamine</name>
        <dbReference type="ChEBI" id="CHEBI:57705"/>
    </ligand>
</feature>
<name>MURG_MAGMM</name>
<proteinExistence type="inferred from homology"/>
<evidence type="ECO:0000255" key="1">
    <source>
        <dbReference type="HAMAP-Rule" id="MF_00033"/>
    </source>
</evidence>
<comment type="function">
    <text evidence="1">Cell wall formation. Catalyzes the transfer of a GlcNAc subunit on undecaprenyl-pyrophosphoryl-MurNAc-pentapeptide (lipid intermediate I) to form undecaprenyl-pyrophosphoryl-MurNAc-(pentapeptide)GlcNAc (lipid intermediate II).</text>
</comment>
<comment type="catalytic activity">
    <reaction evidence="1">
        <text>di-trans,octa-cis-undecaprenyl diphospho-N-acetyl-alpha-D-muramoyl-L-alanyl-D-glutamyl-meso-2,6-diaminopimeloyl-D-alanyl-D-alanine + UDP-N-acetyl-alpha-D-glucosamine = di-trans,octa-cis-undecaprenyl diphospho-[N-acetyl-alpha-D-glucosaminyl-(1-&gt;4)]-N-acetyl-alpha-D-muramoyl-L-alanyl-D-glutamyl-meso-2,6-diaminopimeloyl-D-alanyl-D-alanine + UDP + H(+)</text>
        <dbReference type="Rhea" id="RHEA:31227"/>
        <dbReference type="ChEBI" id="CHEBI:15378"/>
        <dbReference type="ChEBI" id="CHEBI:57705"/>
        <dbReference type="ChEBI" id="CHEBI:58223"/>
        <dbReference type="ChEBI" id="CHEBI:61387"/>
        <dbReference type="ChEBI" id="CHEBI:61388"/>
        <dbReference type="EC" id="2.4.1.227"/>
    </reaction>
</comment>
<comment type="pathway">
    <text evidence="1">Cell wall biogenesis; peptidoglycan biosynthesis.</text>
</comment>
<comment type="subcellular location">
    <subcellularLocation>
        <location evidence="1">Cell inner membrane</location>
        <topology evidence="1">Peripheral membrane protein</topology>
        <orientation evidence="1">Cytoplasmic side</orientation>
    </subcellularLocation>
</comment>
<comment type="similarity">
    <text evidence="1">Belongs to the glycosyltransferase 28 family. MurG subfamily.</text>
</comment>
<organism>
    <name type="scientific">Magnetococcus marinus (strain ATCC BAA-1437 / JCM 17883 / MC-1)</name>
    <dbReference type="NCBI Taxonomy" id="156889"/>
    <lineage>
        <taxon>Bacteria</taxon>
        <taxon>Pseudomonadati</taxon>
        <taxon>Pseudomonadota</taxon>
        <taxon>Alphaproteobacteria</taxon>
        <taxon>Magnetococcales</taxon>
        <taxon>Magnetococcaceae</taxon>
        <taxon>Magnetococcus</taxon>
    </lineage>
</organism>
<accession>A0L5N1</accession>
<keyword id="KW-0131">Cell cycle</keyword>
<keyword id="KW-0132">Cell division</keyword>
<keyword id="KW-0997">Cell inner membrane</keyword>
<keyword id="KW-1003">Cell membrane</keyword>
<keyword id="KW-0133">Cell shape</keyword>
<keyword id="KW-0961">Cell wall biogenesis/degradation</keyword>
<keyword id="KW-0328">Glycosyltransferase</keyword>
<keyword id="KW-0472">Membrane</keyword>
<keyword id="KW-0573">Peptidoglycan synthesis</keyword>
<keyword id="KW-1185">Reference proteome</keyword>
<keyword id="KW-0808">Transferase</keyword>
<protein>
    <recommendedName>
        <fullName evidence="1">UDP-N-acetylglucosamine--N-acetylmuramyl-(pentapeptide) pyrophosphoryl-undecaprenol N-acetylglucosamine transferase</fullName>
        <ecNumber evidence="1">2.4.1.227</ecNumber>
    </recommendedName>
    <alternativeName>
        <fullName evidence="1">Undecaprenyl-PP-MurNAc-pentapeptide-UDPGlcNAc GlcNAc transferase</fullName>
    </alternativeName>
</protein>
<dbReference type="EC" id="2.4.1.227" evidence="1"/>
<dbReference type="EMBL" id="CP000471">
    <property type="protein sequence ID" value="ABK43274.1"/>
    <property type="molecule type" value="Genomic_DNA"/>
</dbReference>
<dbReference type="RefSeq" id="WP_011712434.1">
    <property type="nucleotide sequence ID" value="NC_008576.1"/>
</dbReference>
<dbReference type="SMR" id="A0L5N1"/>
<dbReference type="STRING" id="156889.Mmc1_0753"/>
<dbReference type="CAZy" id="GT28">
    <property type="family name" value="Glycosyltransferase Family 28"/>
</dbReference>
<dbReference type="KEGG" id="mgm:Mmc1_0753"/>
<dbReference type="eggNOG" id="COG0707">
    <property type="taxonomic scope" value="Bacteria"/>
</dbReference>
<dbReference type="HOGENOM" id="CLU_037404_2_1_5"/>
<dbReference type="OrthoDB" id="9808936at2"/>
<dbReference type="UniPathway" id="UPA00219"/>
<dbReference type="Proteomes" id="UP000002586">
    <property type="component" value="Chromosome"/>
</dbReference>
<dbReference type="GO" id="GO:0005886">
    <property type="term" value="C:plasma membrane"/>
    <property type="evidence" value="ECO:0007669"/>
    <property type="project" value="UniProtKB-SubCell"/>
</dbReference>
<dbReference type="GO" id="GO:0051991">
    <property type="term" value="F:UDP-N-acetyl-D-glucosamine:N-acetylmuramoyl-L-alanyl-D-glutamyl-meso-2,6-diaminopimelyl-D-alanyl-D-alanine-diphosphoundecaprenol 4-beta-N-acetylglucosaminlytransferase activity"/>
    <property type="evidence" value="ECO:0007669"/>
    <property type="project" value="RHEA"/>
</dbReference>
<dbReference type="GO" id="GO:0050511">
    <property type="term" value="F:undecaprenyldiphospho-muramoylpentapeptide beta-N-acetylglucosaminyltransferase activity"/>
    <property type="evidence" value="ECO:0007669"/>
    <property type="project" value="UniProtKB-UniRule"/>
</dbReference>
<dbReference type="GO" id="GO:0005975">
    <property type="term" value="P:carbohydrate metabolic process"/>
    <property type="evidence" value="ECO:0007669"/>
    <property type="project" value="InterPro"/>
</dbReference>
<dbReference type="GO" id="GO:0051301">
    <property type="term" value="P:cell division"/>
    <property type="evidence" value="ECO:0007669"/>
    <property type="project" value="UniProtKB-KW"/>
</dbReference>
<dbReference type="GO" id="GO:0071555">
    <property type="term" value="P:cell wall organization"/>
    <property type="evidence" value="ECO:0007669"/>
    <property type="project" value="UniProtKB-KW"/>
</dbReference>
<dbReference type="GO" id="GO:0030259">
    <property type="term" value="P:lipid glycosylation"/>
    <property type="evidence" value="ECO:0007669"/>
    <property type="project" value="UniProtKB-UniRule"/>
</dbReference>
<dbReference type="GO" id="GO:0009252">
    <property type="term" value="P:peptidoglycan biosynthetic process"/>
    <property type="evidence" value="ECO:0007669"/>
    <property type="project" value="UniProtKB-UniRule"/>
</dbReference>
<dbReference type="GO" id="GO:0008360">
    <property type="term" value="P:regulation of cell shape"/>
    <property type="evidence" value="ECO:0007669"/>
    <property type="project" value="UniProtKB-KW"/>
</dbReference>
<dbReference type="CDD" id="cd03785">
    <property type="entry name" value="GT28_MurG"/>
    <property type="match status" value="1"/>
</dbReference>
<dbReference type="Gene3D" id="3.40.50.2000">
    <property type="entry name" value="Glycogen Phosphorylase B"/>
    <property type="match status" value="2"/>
</dbReference>
<dbReference type="HAMAP" id="MF_00033">
    <property type="entry name" value="MurG"/>
    <property type="match status" value="1"/>
</dbReference>
<dbReference type="InterPro" id="IPR006009">
    <property type="entry name" value="GlcNAc_MurG"/>
</dbReference>
<dbReference type="InterPro" id="IPR007235">
    <property type="entry name" value="Glyco_trans_28_C"/>
</dbReference>
<dbReference type="InterPro" id="IPR004276">
    <property type="entry name" value="GlycoTrans_28_N"/>
</dbReference>
<dbReference type="NCBIfam" id="TIGR01133">
    <property type="entry name" value="murG"/>
    <property type="match status" value="1"/>
</dbReference>
<dbReference type="PANTHER" id="PTHR21015:SF22">
    <property type="entry name" value="GLYCOSYLTRANSFERASE"/>
    <property type="match status" value="1"/>
</dbReference>
<dbReference type="PANTHER" id="PTHR21015">
    <property type="entry name" value="UDP-N-ACETYLGLUCOSAMINE--N-ACETYLMURAMYL-(PENTAPEPTIDE) PYROPHOSPHORYL-UNDECAPRENOL N-ACETYLGLUCOSAMINE TRANSFERASE 1"/>
    <property type="match status" value="1"/>
</dbReference>
<dbReference type="Pfam" id="PF04101">
    <property type="entry name" value="Glyco_tran_28_C"/>
    <property type="match status" value="1"/>
</dbReference>
<dbReference type="Pfam" id="PF03033">
    <property type="entry name" value="Glyco_transf_28"/>
    <property type="match status" value="1"/>
</dbReference>
<dbReference type="SUPFAM" id="SSF53756">
    <property type="entry name" value="UDP-Glycosyltransferase/glycogen phosphorylase"/>
    <property type="match status" value="1"/>
</dbReference>
<sequence>MNNTPRRLLIAGGGTGGHLFPALAVAERWRERYGLHSVHFIGGQRGLENRLVPNAGFTLETLAVGQLKGKGLPHKLRTLGGLLPAVWQARGMVQRFDPHVVLGVGGYASAPAMVAARSLGIPMALHEQNARAGLTNRLLSHLAQQVLVSFNGVCAQFPGRACQLTGNPVRQALAAVPPLQIPTLFTPQRPLRILVFGGSQGASIFTQRVPEALLPLAQHGAPIQVTQQVQEADADALQRRYQEGGIEAITTPFIEDMATAYAQADLVICRSGATSVAELAATGRPSIMVPYPYAADDHQAANAQALVSIQGGWMRRQEQFHSAWLEAFITSLCMQPAQLQRAGEIARSYARPNADMQIVTLLASMVKMKR</sequence>
<reference key="1">
    <citation type="journal article" date="2009" name="Appl. Environ. Microbiol.">
        <title>Complete genome sequence of the chemolithoautotrophic marine magnetotactic coccus strain MC-1.</title>
        <authorList>
            <person name="Schubbe S."/>
            <person name="Williams T.J."/>
            <person name="Xie G."/>
            <person name="Kiss H.E."/>
            <person name="Brettin T.S."/>
            <person name="Martinez D."/>
            <person name="Ross C.A."/>
            <person name="Schuler D."/>
            <person name="Cox B.L."/>
            <person name="Nealson K.H."/>
            <person name="Bazylinski D.A."/>
        </authorList>
    </citation>
    <scope>NUCLEOTIDE SEQUENCE [LARGE SCALE GENOMIC DNA]</scope>
    <source>
        <strain>ATCC BAA-1437 / JCM 17883 / MC-1</strain>
    </source>
</reference>
<gene>
    <name evidence="1" type="primary">murG</name>
    <name type="ordered locus">Mmc1_0753</name>
</gene>